<feature type="signal peptide" evidence="3">
    <location>
        <begin position="1"/>
        <end position="23"/>
    </location>
</feature>
<feature type="chain" id="PRO_0000431267" description="Transmembrane 9 superfamily member 10" evidence="3">
    <location>
        <begin position="24"/>
        <end position="637"/>
    </location>
</feature>
<feature type="topological domain" description="Lumenal" evidence="6">
    <location>
        <begin position="24"/>
        <end position="274"/>
    </location>
</feature>
<feature type="transmembrane region" description="Helical; Name=1" evidence="3">
    <location>
        <begin position="275"/>
        <end position="295"/>
    </location>
</feature>
<feature type="topological domain" description="Cytoplasmic" evidence="6">
    <location>
        <begin position="296"/>
        <end position="344"/>
    </location>
</feature>
<feature type="transmembrane region" description="Helical; Name=2" evidence="3">
    <location>
        <begin position="345"/>
        <end position="365"/>
    </location>
</feature>
<feature type="topological domain" description="Lumenal" evidence="6">
    <location>
        <begin position="366"/>
        <end position="370"/>
    </location>
</feature>
<feature type="transmembrane region" description="Helical; Name=3" evidence="3">
    <location>
        <begin position="371"/>
        <end position="391"/>
    </location>
</feature>
<feature type="topological domain" description="Cytoplasmic" evidence="6">
    <location>
        <begin position="392"/>
        <end position="411"/>
    </location>
</feature>
<feature type="transmembrane region" description="Helical; Name=4" evidence="3">
    <location>
        <begin position="412"/>
        <end position="432"/>
    </location>
</feature>
<feature type="topological domain" description="Lumenal" evidence="6">
    <location>
        <begin position="433"/>
        <end position="444"/>
    </location>
</feature>
<feature type="transmembrane region" description="Helical; Name=5" evidence="3">
    <location>
        <begin position="445"/>
        <end position="465"/>
    </location>
</feature>
<feature type="topological domain" description="Cytoplasmic" evidence="6">
    <location>
        <begin position="466"/>
        <end position="494"/>
    </location>
</feature>
<feature type="transmembrane region" description="Helical; Name=6" evidence="3">
    <location>
        <begin position="495"/>
        <end position="515"/>
    </location>
</feature>
<feature type="topological domain" description="Lumenal" evidence="6">
    <location>
        <begin position="516"/>
        <end position="527"/>
    </location>
</feature>
<feature type="transmembrane region" description="Helical; Name=7" evidence="3">
    <location>
        <begin position="528"/>
        <end position="548"/>
    </location>
</feature>
<feature type="topological domain" description="Cytoplasmic" evidence="6">
    <location>
        <begin position="549"/>
        <end position="566"/>
    </location>
</feature>
<feature type="transmembrane region" description="Helical; Name=8" evidence="3">
    <location>
        <begin position="567"/>
        <end position="587"/>
    </location>
</feature>
<feature type="topological domain" description="Lumenal" evidence="6">
    <location>
        <begin position="588"/>
        <end position="593"/>
    </location>
</feature>
<feature type="transmembrane region" description="Helical; Name=9" evidence="3">
    <location>
        <begin position="594"/>
        <end position="614"/>
    </location>
</feature>
<feature type="topological domain" description="Cytoplasmic" evidence="6">
    <location>
        <begin position="615"/>
        <end position="637"/>
    </location>
</feature>
<feature type="short sequence motif" description="Endoplasmic reticulum export signal" evidence="2">
    <location>
        <begin position="626"/>
        <end position="631"/>
    </location>
</feature>
<feature type="short sequence motif" description="Golgi retention signal" evidence="2">
    <location>
        <begin position="635"/>
        <end position="637"/>
    </location>
</feature>
<organism>
    <name type="scientific">Arabidopsis thaliana</name>
    <name type="common">Mouse-ear cress</name>
    <dbReference type="NCBI Taxonomy" id="3702"/>
    <lineage>
        <taxon>Eukaryota</taxon>
        <taxon>Viridiplantae</taxon>
        <taxon>Streptophyta</taxon>
        <taxon>Embryophyta</taxon>
        <taxon>Tracheophyta</taxon>
        <taxon>Spermatophyta</taxon>
        <taxon>Magnoliopsida</taxon>
        <taxon>eudicotyledons</taxon>
        <taxon>Gunneridae</taxon>
        <taxon>Pentapetalae</taxon>
        <taxon>rosids</taxon>
        <taxon>malvids</taxon>
        <taxon>Brassicales</taxon>
        <taxon>Brassicaceae</taxon>
        <taxon>Camelineae</taxon>
        <taxon>Arabidopsis</taxon>
    </lineage>
</organism>
<reference key="1">
    <citation type="journal article" date="1999" name="Nature">
        <title>Sequence and analysis of chromosome 2 of the plant Arabidopsis thaliana.</title>
        <authorList>
            <person name="Lin X."/>
            <person name="Kaul S."/>
            <person name="Rounsley S.D."/>
            <person name="Shea T.P."/>
            <person name="Benito M.-I."/>
            <person name="Town C.D."/>
            <person name="Fujii C.Y."/>
            <person name="Mason T.M."/>
            <person name="Bowman C.L."/>
            <person name="Barnstead M.E."/>
            <person name="Feldblyum T.V."/>
            <person name="Buell C.R."/>
            <person name="Ketchum K.A."/>
            <person name="Lee J.J."/>
            <person name="Ronning C.M."/>
            <person name="Koo H.L."/>
            <person name="Moffat K.S."/>
            <person name="Cronin L.A."/>
            <person name="Shen M."/>
            <person name="Pai G."/>
            <person name="Van Aken S."/>
            <person name="Umayam L."/>
            <person name="Tallon L.J."/>
            <person name="Gill J.E."/>
            <person name="Adams M.D."/>
            <person name="Carrera A.J."/>
            <person name="Creasy T.H."/>
            <person name="Goodman H.M."/>
            <person name="Somerville C.R."/>
            <person name="Copenhaver G.P."/>
            <person name="Preuss D."/>
            <person name="Nierman W.C."/>
            <person name="White O."/>
            <person name="Eisen J.A."/>
            <person name="Salzberg S.L."/>
            <person name="Fraser C.M."/>
            <person name="Venter J.C."/>
        </authorList>
    </citation>
    <scope>NUCLEOTIDE SEQUENCE [LARGE SCALE GENOMIC DNA]</scope>
    <source>
        <strain>cv. Columbia</strain>
    </source>
</reference>
<reference key="2">
    <citation type="journal article" date="2017" name="Plant J.">
        <title>Araport11: a complete reannotation of the Arabidopsis thaliana reference genome.</title>
        <authorList>
            <person name="Cheng C.Y."/>
            <person name="Krishnakumar V."/>
            <person name="Chan A.P."/>
            <person name="Thibaud-Nissen F."/>
            <person name="Schobel S."/>
            <person name="Town C.D."/>
        </authorList>
    </citation>
    <scope>GENOME REANNOTATION</scope>
    <source>
        <strain>cv. Columbia</strain>
    </source>
</reference>
<reference key="3">
    <citation type="journal article" date="2003" name="Science">
        <title>Empirical analysis of transcriptional activity in the Arabidopsis genome.</title>
        <authorList>
            <person name="Yamada K."/>
            <person name="Lim J."/>
            <person name="Dale J.M."/>
            <person name="Chen H."/>
            <person name="Shinn P."/>
            <person name="Palm C.J."/>
            <person name="Southwick A.M."/>
            <person name="Wu H.C."/>
            <person name="Kim C.J."/>
            <person name="Nguyen M."/>
            <person name="Pham P.K."/>
            <person name="Cheuk R.F."/>
            <person name="Karlin-Newmann G."/>
            <person name="Liu S.X."/>
            <person name="Lam B."/>
            <person name="Sakano H."/>
            <person name="Wu T."/>
            <person name="Yu G."/>
            <person name="Miranda M."/>
            <person name="Quach H.L."/>
            <person name="Tripp M."/>
            <person name="Chang C.H."/>
            <person name="Lee J.M."/>
            <person name="Toriumi M.J."/>
            <person name="Chan M.M."/>
            <person name="Tang C.C."/>
            <person name="Onodera C.S."/>
            <person name="Deng J.M."/>
            <person name="Akiyama K."/>
            <person name="Ansari Y."/>
            <person name="Arakawa T."/>
            <person name="Banh J."/>
            <person name="Banno F."/>
            <person name="Bowser L."/>
            <person name="Brooks S.Y."/>
            <person name="Carninci P."/>
            <person name="Chao Q."/>
            <person name="Choy N."/>
            <person name="Enju A."/>
            <person name="Goldsmith A.D."/>
            <person name="Gurjal M."/>
            <person name="Hansen N.F."/>
            <person name="Hayashizaki Y."/>
            <person name="Johnson-Hopson C."/>
            <person name="Hsuan V.W."/>
            <person name="Iida K."/>
            <person name="Karnes M."/>
            <person name="Khan S."/>
            <person name="Koesema E."/>
            <person name="Ishida J."/>
            <person name="Jiang P.X."/>
            <person name="Jones T."/>
            <person name="Kawai J."/>
            <person name="Kamiya A."/>
            <person name="Meyers C."/>
            <person name="Nakajima M."/>
            <person name="Narusaka M."/>
            <person name="Seki M."/>
            <person name="Sakurai T."/>
            <person name="Satou M."/>
            <person name="Tamse R."/>
            <person name="Vaysberg M."/>
            <person name="Wallender E.K."/>
            <person name="Wong C."/>
            <person name="Yamamura Y."/>
            <person name="Yuan S."/>
            <person name="Shinozaki K."/>
            <person name="Davis R.W."/>
            <person name="Theologis A."/>
            <person name="Ecker J.R."/>
        </authorList>
    </citation>
    <scope>NUCLEOTIDE SEQUENCE [LARGE SCALE MRNA]</scope>
    <source>
        <strain>cv. Columbia</strain>
    </source>
</reference>
<reference key="4">
    <citation type="journal article" date="2010" name="Physiol. Plantarum">
        <title>Transmembrane nine proteins in yeast and Arabidopsis affect cellular metal contents without changing vacuolar morphology.</title>
        <authorList>
            <person name="Hegelund J.N."/>
            <person name="Jahn T.P."/>
            <person name="Baekgaard L."/>
            <person name="Palmgren M.G."/>
            <person name="Schjoerring J.K."/>
        </authorList>
    </citation>
    <scope>GENE FAMILY</scope>
    <scope>NOMENCLATURE</scope>
</reference>
<reference key="5">
    <citation type="journal article" date="2012" name="Plant Cell">
        <title>The Golgi-localized Arabidopsis endomembrane protein12 contains both endoplasmic reticulum export and Golgi retention signals at its C terminus.</title>
        <authorList>
            <person name="Gao C."/>
            <person name="Yu C.K."/>
            <person name="Qu S."/>
            <person name="San M.W."/>
            <person name="Li K.Y."/>
            <person name="Lo S.W."/>
            <person name="Jiang L."/>
        </authorList>
    </citation>
    <scope>GENE FAMILY</scope>
    <scope>NOMENCLATURE</scope>
</reference>
<dbReference type="EMBL" id="AC005967">
    <property type="protein sequence ID" value="AAD03378.1"/>
    <property type="status" value="ALT_SEQ"/>
    <property type="molecule type" value="Genomic_DNA"/>
</dbReference>
<dbReference type="EMBL" id="CP002685">
    <property type="protein sequence ID" value="AEC07535.1"/>
    <property type="molecule type" value="Genomic_DNA"/>
</dbReference>
<dbReference type="EMBL" id="AY091067">
    <property type="protein sequence ID" value="AAM13887.1"/>
    <property type="molecule type" value="mRNA"/>
</dbReference>
<dbReference type="PIR" id="D84633">
    <property type="entry name" value="D84633"/>
</dbReference>
<dbReference type="RefSeq" id="NP_179994.2">
    <property type="nucleotide sequence ID" value="NM_127978.4"/>
</dbReference>
<dbReference type="BioGRID" id="2303">
    <property type="interactions" value="26"/>
</dbReference>
<dbReference type="FunCoup" id="Q8RWW1">
    <property type="interactions" value="4676"/>
</dbReference>
<dbReference type="IntAct" id="Q8RWW1">
    <property type="interactions" value="24"/>
</dbReference>
<dbReference type="STRING" id="3702.Q8RWW1"/>
<dbReference type="PaxDb" id="3702-AT2G24170.1"/>
<dbReference type="ProteomicsDB" id="234437"/>
<dbReference type="EnsemblPlants" id="AT2G24170.1">
    <property type="protein sequence ID" value="AT2G24170.1"/>
    <property type="gene ID" value="AT2G24170"/>
</dbReference>
<dbReference type="GeneID" id="816951"/>
<dbReference type="Gramene" id="AT2G24170.1">
    <property type="protein sequence ID" value="AT2G24170.1"/>
    <property type="gene ID" value="AT2G24170"/>
</dbReference>
<dbReference type="KEGG" id="ath:AT2G24170"/>
<dbReference type="Araport" id="AT2G24170"/>
<dbReference type="TAIR" id="AT2G24170"/>
<dbReference type="eggNOG" id="KOG1278">
    <property type="taxonomic scope" value="Eukaryota"/>
</dbReference>
<dbReference type="HOGENOM" id="CLU_010714_4_1_1"/>
<dbReference type="InParanoid" id="Q8RWW1"/>
<dbReference type="OMA" id="VVGFEVY"/>
<dbReference type="PhylomeDB" id="Q8RWW1"/>
<dbReference type="PRO" id="PR:Q8RWW1"/>
<dbReference type="Proteomes" id="UP000006548">
    <property type="component" value="Chromosome 2"/>
</dbReference>
<dbReference type="ExpressionAtlas" id="Q8RWW1">
    <property type="expression patterns" value="baseline and differential"/>
</dbReference>
<dbReference type="GO" id="GO:0010008">
    <property type="term" value="C:endosome membrane"/>
    <property type="evidence" value="ECO:0007669"/>
    <property type="project" value="UniProtKB-SubCell"/>
</dbReference>
<dbReference type="GO" id="GO:0005794">
    <property type="term" value="C:Golgi apparatus"/>
    <property type="evidence" value="ECO:0007005"/>
    <property type="project" value="TAIR"/>
</dbReference>
<dbReference type="GO" id="GO:0000139">
    <property type="term" value="C:Golgi membrane"/>
    <property type="evidence" value="ECO:0007669"/>
    <property type="project" value="UniProtKB-SubCell"/>
</dbReference>
<dbReference type="InterPro" id="IPR004240">
    <property type="entry name" value="EMP70"/>
</dbReference>
<dbReference type="PANTHER" id="PTHR10766:SF154">
    <property type="entry name" value="TRANSMEMBRANE 9 SUPERFAMILY MEMBER 10"/>
    <property type="match status" value="1"/>
</dbReference>
<dbReference type="PANTHER" id="PTHR10766">
    <property type="entry name" value="TRANSMEMBRANE 9 SUPERFAMILY PROTEIN"/>
    <property type="match status" value="1"/>
</dbReference>
<dbReference type="Pfam" id="PF02990">
    <property type="entry name" value="EMP70"/>
    <property type="match status" value="1"/>
</dbReference>
<protein>
    <recommendedName>
        <fullName evidence="6">Transmembrane 9 superfamily member 10</fullName>
    </recommendedName>
    <alternativeName>
        <fullName evidence="5">Endomembrane protein 3</fullName>
    </alternativeName>
    <alternativeName>
        <fullName evidence="4">Transmembrane nine protein 10</fullName>
        <shortName evidence="4">AtTMN10</shortName>
    </alternativeName>
</protein>
<name>TMN10_ARATH</name>
<keyword id="KW-0967">Endosome</keyword>
<keyword id="KW-0333">Golgi apparatus</keyword>
<keyword id="KW-0472">Membrane</keyword>
<keyword id="KW-1185">Reference proteome</keyword>
<keyword id="KW-0732">Signal</keyword>
<keyword id="KW-0812">Transmembrane</keyword>
<keyword id="KW-1133">Transmembrane helix</keyword>
<gene>
    <name evidence="4" type="primary">TMN10</name>
    <name evidence="5" type="synonym">EMP3</name>
    <name evidence="7" type="ordered locus">At2g24170</name>
    <name evidence="8" type="ORF">F27D4.8</name>
</gene>
<accession>Q8RWW1</accession>
<accession>Q9ZUH6</accession>
<proteinExistence type="evidence at transcript level"/>
<sequence>MAKVRILIFTLVLFFSLNVHIHGFYLPGVAPQDFQMGDALMVKVNKLTSTKTQLPYSYYSLPYCRPEHIVDSAENLGEVLRGDRIENSPFVFKMRESQMCAAVCRVKLDKKTAKAFKEKIADEYRVNMILDNLPLVVPVQRPDQDNVVVYQHGFHVGLKGIFAGKKEEKYFIHNHLTFTVRYHRDIQTDSSRIVGFEVKPFSVKHEYEGQWNEKARLTTCDPHTKRAVTNSESPQEVEEGNEIIFTYDVDFQESEVKWASRWDTYLLMADDQIHWFSIVNSMMIVLFLSGMVAMIMLRTLYRDISNYNQLESHEEALEETGWKLVHGDVFRPPTNPELLCVYAGTGVQCFGMILVTMIFACLGFLSPSNRGGLMTAMLLLWVFMGLLAGYASSRLYKTLRGTEWKRNALKTAFMFPATVFVAFFVLNAIIWGQKSSGAVPFGTMFALVVLWFGISVPLVFIGGYIGFRKPAPEDPVKTNKIPRQIPTQAWYMNPIFSILIGGILPFGAVFIELFFILTSIWLHQFYYIFGFLFIVFIILIITCAEITVVLCYFQLCSEDYQWWWRSYLTSGSSAVYLFLYAVFYFYTKLEITKLVSAVLYFGYMLIVSYVFFVFTGAIGFYACFWFTRLIYSSVKID</sequence>
<evidence type="ECO:0000250" key="1">
    <source>
        <dbReference type="UniProtKB" id="P32802"/>
    </source>
</evidence>
<evidence type="ECO:0000250" key="2">
    <source>
        <dbReference type="UniProtKB" id="Q940G0"/>
    </source>
</evidence>
<evidence type="ECO:0000255" key="3"/>
<evidence type="ECO:0000303" key="4">
    <source>
    </source>
</evidence>
<evidence type="ECO:0000303" key="5">
    <source>
    </source>
</evidence>
<evidence type="ECO:0000305" key="6"/>
<evidence type="ECO:0000312" key="7">
    <source>
        <dbReference type="Araport" id="AT2G24170"/>
    </source>
</evidence>
<evidence type="ECO:0000312" key="8">
    <source>
        <dbReference type="EMBL" id="AAD03378.1"/>
    </source>
</evidence>
<comment type="subcellular location">
    <subcellularLocation>
        <location evidence="1">Endosome membrane</location>
        <topology evidence="3">Multi-pass membrane protein</topology>
    </subcellularLocation>
    <subcellularLocation>
        <location evidence="2">Golgi apparatus membrane</location>
        <topology evidence="3">Multi-pass membrane protein</topology>
    </subcellularLocation>
</comment>
<comment type="domain">
    <text evidence="2">The C-terminal KXD/E motif functions as a Golgi retention signal, certainly through the binding to the COP1 coatomer.</text>
</comment>
<comment type="similarity">
    <text>Belongs to the nonaspanin (TM9SF) (TC 9.A.2) family.</text>
</comment>
<comment type="sequence caution" evidence="6">
    <conflict type="erroneous gene model prediction">
        <sequence resource="EMBL-CDS" id="AAD03378"/>
    </conflict>
</comment>